<accession>Q969Z4</accession>
<accession>Q86V34</accession>
<accession>Q96JU1</accession>
<accession>Q9BUX7</accession>
<name>TR19L_HUMAN</name>
<organism>
    <name type="scientific">Homo sapiens</name>
    <name type="common">Human</name>
    <dbReference type="NCBI Taxonomy" id="9606"/>
    <lineage>
        <taxon>Eukaryota</taxon>
        <taxon>Metazoa</taxon>
        <taxon>Chordata</taxon>
        <taxon>Craniata</taxon>
        <taxon>Vertebrata</taxon>
        <taxon>Euteleostomi</taxon>
        <taxon>Mammalia</taxon>
        <taxon>Eutheria</taxon>
        <taxon>Euarchontoglires</taxon>
        <taxon>Primates</taxon>
        <taxon>Haplorrhini</taxon>
        <taxon>Catarrhini</taxon>
        <taxon>Hominidae</taxon>
        <taxon>Homo</taxon>
    </lineage>
</organism>
<reference key="1">
    <citation type="journal article" date="2001" name="Blood">
        <title>RELT, a new member of the tumor necrosis factor receptor superfamily, is selectively expressed in hematopoietic tissues and activates transcription factor NF-kappaB.</title>
        <authorList>
            <person name="Sica G.L."/>
            <person name="Zhu G."/>
            <person name="Tamada K."/>
            <person name="Liu D."/>
            <person name="Ni J."/>
            <person name="Chen L."/>
        </authorList>
    </citation>
    <scope>NUCLEOTIDE SEQUENCE [MRNA]</scope>
    <scope>PROTEIN SEQUENCE OF N-TERMINUS</scope>
    <scope>INTERACTION WITH TRAF1</scope>
    <source>
        <tissue>Lymphoma</tissue>
    </source>
</reference>
<reference key="2">
    <citation type="journal article" date="2004" name="Nat. Genet.">
        <title>Complete sequencing and characterization of 21,243 full-length human cDNAs.</title>
        <authorList>
            <person name="Ota T."/>
            <person name="Suzuki Y."/>
            <person name="Nishikawa T."/>
            <person name="Otsuki T."/>
            <person name="Sugiyama T."/>
            <person name="Irie R."/>
            <person name="Wakamatsu A."/>
            <person name="Hayashi K."/>
            <person name="Sato H."/>
            <person name="Nagai K."/>
            <person name="Kimura K."/>
            <person name="Makita H."/>
            <person name="Sekine M."/>
            <person name="Obayashi M."/>
            <person name="Nishi T."/>
            <person name="Shibahara T."/>
            <person name="Tanaka T."/>
            <person name="Ishii S."/>
            <person name="Yamamoto J."/>
            <person name="Saito K."/>
            <person name="Kawai Y."/>
            <person name="Isono Y."/>
            <person name="Nakamura Y."/>
            <person name="Nagahari K."/>
            <person name="Murakami K."/>
            <person name="Yasuda T."/>
            <person name="Iwayanagi T."/>
            <person name="Wagatsuma M."/>
            <person name="Shiratori A."/>
            <person name="Sudo H."/>
            <person name="Hosoiri T."/>
            <person name="Kaku Y."/>
            <person name="Kodaira H."/>
            <person name="Kondo H."/>
            <person name="Sugawara M."/>
            <person name="Takahashi M."/>
            <person name="Kanda K."/>
            <person name="Yokoi T."/>
            <person name="Furuya T."/>
            <person name="Kikkawa E."/>
            <person name="Omura Y."/>
            <person name="Abe K."/>
            <person name="Kamihara K."/>
            <person name="Katsuta N."/>
            <person name="Sato K."/>
            <person name="Tanikawa M."/>
            <person name="Yamazaki M."/>
            <person name="Ninomiya K."/>
            <person name="Ishibashi T."/>
            <person name="Yamashita H."/>
            <person name="Murakawa K."/>
            <person name="Fujimori K."/>
            <person name="Tanai H."/>
            <person name="Kimata M."/>
            <person name="Watanabe M."/>
            <person name="Hiraoka S."/>
            <person name="Chiba Y."/>
            <person name="Ishida S."/>
            <person name="Ono Y."/>
            <person name="Takiguchi S."/>
            <person name="Watanabe S."/>
            <person name="Yosida M."/>
            <person name="Hotuta T."/>
            <person name="Kusano J."/>
            <person name="Kanehori K."/>
            <person name="Takahashi-Fujii A."/>
            <person name="Hara H."/>
            <person name="Tanase T.-O."/>
            <person name="Nomura Y."/>
            <person name="Togiya S."/>
            <person name="Komai F."/>
            <person name="Hara R."/>
            <person name="Takeuchi K."/>
            <person name="Arita M."/>
            <person name="Imose N."/>
            <person name="Musashino K."/>
            <person name="Yuuki H."/>
            <person name="Oshima A."/>
            <person name="Sasaki N."/>
            <person name="Aotsuka S."/>
            <person name="Yoshikawa Y."/>
            <person name="Matsunawa H."/>
            <person name="Ichihara T."/>
            <person name="Shiohata N."/>
            <person name="Sano S."/>
            <person name="Moriya S."/>
            <person name="Momiyama H."/>
            <person name="Satoh N."/>
            <person name="Takami S."/>
            <person name="Terashima Y."/>
            <person name="Suzuki O."/>
            <person name="Nakagawa S."/>
            <person name="Senoh A."/>
            <person name="Mizoguchi H."/>
            <person name="Goto Y."/>
            <person name="Shimizu F."/>
            <person name="Wakebe H."/>
            <person name="Hishigaki H."/>
            <person name="Watanabe T."/>
            <person name="Sugiyama A."/>
            <person name="Takemoto M."/>
            <person name="Kawakami B."/>
            <person name="Yamazaki M."/>
            <person name="Watanabe K."/>
            <person name="Kumagai A."/>
            <person name="Itakura S."/>
            <person name="Fukuzumi Y."/>
            <person name="Fujimori Y."/>
            <person name="Komiyama M."/>
            <person name="Tashiro H."/>
            <person name="Tanigami A."/>
            <person name="Fujiwara T."/>
            <person name="Ono T."/>
            <person name="Yamada K."/>
            <person name="Fujii Y."/>
            <person name="Ozaki K."/>
            <person name="Hirao M."/>
            <person name="Ohmori Y."/>
            <person name="Kawabata A."/>
            <person name="Hikiji T."/>
            <person name="Kobatake N."/>
            <person name="Inagaki H."/>
            <person name="Ikema Y."/>
            <person name="Okamoto S."/>
            <person name="Okitani R."/>
            <person name="Kawakami T."/>
            <person name="Noguchi S."/>
            <person name="Itoh T."/>
            <person name="Shigeta K."/>
            <person name="Senba T."/>
            <person name="Matsumura K."/>
            <person name="Nakajima Y."/>
            <person name="Mizuno T."/>
            <person name="Morinaga M."/>
            <person name="Sasaki M."/>
            <person name="Togashi T."/>
            <person name="Oyama M."/>
            <person name="Hata H."/>
            <person name="Watanabe M."/>
            <person name="Komatsu T."/>
            <person name="Mizushima-Sugano J."/>
            <person name="Satoh T."/>
            <person name="Shirai Y."/>
            <person name="Takahashi Y."/>
            <person name="Nakagawa K."/>
            <person name="Okumura K."/>
            <person name="Nagase T."/>
            <person name="Nomura N."/>
            <person name="Kikuchi H."/>
            <person name="Masuho Y."/>
            <person name="Yamashita R."/>
            <person name="Nakai K."/>
            <person name="Yada T."/>
            <person name="Nakamura Y."/>
            <person name="Ohara O."/>
            <person name="Isogai T."/>
            <person name="Sugano S."/>
        </authorList>
    </citation>
    <scope>NUCLEOTIDE SEQUENCE [LARGE SCALE MRNA]</scope>
    <source>
        <tissue>Retinoblastoma</tissue>
    </source>
</reference>
<reference key="3">
    <citation type="journal article" date="2004" name="Genome Res.">
        <title>The status, quality, and expansion of the NIH full-length cDNA project: the Mammalian Gene Collection (MGC).</title>
        <authorList>
            <consortium name="The MGC Project Team"/>
        </authorList>
    </citation>
    <scope>NUCLEOTIDE SEQUENCE [LARGE SCALE MRNA]</scope>
    <scope>VARIANT VAL-332</scope>
    <source>
        <tissue>Blood</tissue>
        <tissue>Colon</tissue>
        <tissue>Eye</tissue>
    </source>
</reference>
<reference key="4">
    <citation type="submission" date="2002-01" db="EMBL/GenBank/DDBJ databases">
        <title>The nucleotide sequence of a long cDNA clone isolated from human spleen.</title>
        <authorList>
            <person name="Jikuya H."/>
            <person name="Takano J."/>
            <person name="Nomura N."/>
            <person name="Kikuno R."/>
            <person name="Nagase T."/>
            <person name="Ohara O."/>
        </authorList>
    </citation>
    <scope>NUCLEOTIDE SEQUENCE [LARGE SCALE MRNA] OF 121-430</scope>
    <source>
        <tissue>Spleen</tissue>
    </source>
</reference>
<reference key="5">
    <citation type="journal article" date="2004" name="Protein Sci.">
        <title>Signal peptide prediction based on analysis of experimentally verified cleavage sites.</title>
        <authorList>
            <person name="Zhang Z."/>
            <person name="Henzel W.J."/>
        </authorList>
    </citation>
    <scope>PROTEIN SEQUENCE OF 26-40</scope>
</reference>
<reference key="6">
    <citation type="journal article" date="2006" name="Biochem. Biophys. Res. Commun.">
        <title>The TNF receptor, RELT, binds SPAK and uses it to mediate p38 and JNK activation.</title>
        <authorList>
            <person name="Polek T.C."/>
            <person name="Talpaz M."/>
            <person name="Spivak-Kroizman T."/>
        </authorList>
    </citation>
    <scope>FUNCTION</scope>
    <scope>INTERACTION WITH STK39</scope>
    <scope>PHOSPHORYLATION</scope>
    <scope>MUTAGENESIS OF PHE-350</scope>
    <scope>DOMAIN RFRV MOTIF</scope>
</reference>
<reference key="7">
    <citation type="journal article" date="2006" name="Biochem. Biophys. Res. Commun.">
        <title>Identification of RELT homologues that associate with RELT and are phosphorylated by OSR1.</title>
        <authorList>
            <person name="Cusick J.K."/>
            <person name="Xu L.-G."/>
            <person name="Bin L.-H."/>
            <person name="Han K.-J."/>
            <person name="Shu H.-B."/>
        </authorList>
    </citation>
    <scope>SUBCELLULAR LOCATION</scope>
    <scope>TISSUE SPECIFICITY</scope>
    <scope>INTERACTION WITH RELL1; RELL2 AND OXSR1</scope>
    <scope>PHOSPHORYLATION</scope>
</reference>
<reference key="8">
    <citation type="journal article" date="2010" name="Cell. Immunol.">
        <title>RELT induces cellular death in HEK 293 epithelial cells.</title>
        <authorList>
            <person name="Cusick J.K."/>
            <person name="Mustian A."/>
            <person name="Goldberg K."/>
            <person name="Reyland M.E."/>
        </authorList>
    </citation>
    <scope>FUNCTION</scope>
</reference>
<reference key="9">
    <citation type="journal article" date="2012" name="Mol. Cell. Biochem.">
        <title>Identification of PLSCR1 as a protein that interacts with RELT family members.</title>
        <authorList>
            <person name="Cusick J.K."/>
            <person name="Mustian A."/>
            <person name="Jacobs A.T."/>
            <person name="Reyland M.E."/>
        </authorList>
    </citation>
    <scope>INTERACTION WITH PLSCR1</scope>
    <scope>SUBCELLULAR LOCATION</scope>
</reference>
<reference key="10">
    <citation type="journal article" date="2013" name="J. Proteome Res.">
        <title>Toward a comprehensive characterization of a human cancer cell phosphoproteome.</title>
        <authorList>
            <person name="Zhou H."/>
            <person name="Di Palma S."/>
            <person name="Preisinger C."/>
            <person name="Peng M."/>
            <person name="Polat A.N."/>
            <person name="Heck A.J."/>
            <person name="Mohammed S."/>
        </authorList>
    </citation>
    <scope>PHOSPHORYLATION [LARGE SCALE ANALYSIS] AT THR-223</scope>
    <scope>IDENTIFICATION BY MASS SPECTROMETRY [LARGE SCALE ANALYSIS]</scope>
    <source>
        <tissue>Erythroleukemia</tissue>
    </source>
</reference>
<reference key="11">
    <citation type="journal article" date="2017" name="Biochem. Biophys. Res. Commun.">
        <title>RELT family members activate p38 and induce apoptosis by a mechanism distinct from TNFR1.</title>
        <authorList>
            <person name="Moua P."/>
            <person name="Checketts M."/>
            <person name="Xu L.G."/>
            <person name="Shu H.B."/>
            <person name="Reyland M.E."/>
            <person name="Cusick J.K."/>
        </authorList>
    </citation>
    <scope>FUNCTION</scope>
    <scope>TISSUE SPECIFICITY</scope>
</reference>
<reference key="12">
    <citation type="journal article" date="2019" name="Clin. Genet.">
        <title>Mutations in RELT cause autosomal recessive amelogenesis imperfecta.</title>
        <authorList>
            <person name="Kim J.W."/>
            <person name="Zhang H."/>
            <person name="Seymen F."/>
            <person name="Koruyucu M."/>
            <person name="Hu Y."/>
            <person name="Kang J."/>
            <person name="Kim Y.J."/>
            <person name="Ikeda A."/>
            <person name="Kasimoglu Y."/>
            <person name="Bayram M."/>
            <person name="Zhang C."/>
            <person name="Kawasaki K."/>
            <person name="Bartlett J.D."/>
            <person name="Saunders T.L."/>
            <person name="Simmer J.P."/>
            <person name="Hu J.C."/>
        </authorList>
    </citation>
    <scope>FUNCTION</scope>
    <scope>INVOLVEMENT IN AI3C</scope>
    <scope>VARIANT AI3C PRO-422</scope>
</reference>
<comment type="function">
    <text evidence="8 9 11 12">May play a role in apoptosis (PubMed:19969290, PubMed:28688764). Induces activation of MAPK14/p38 and MAPK8/JNK MAPK cascades, when overexpressed (PubMed:16530727). Involved in dental enamel formation (PubMed:30506946).</text>
</comment>
<comment type="subunit">
    <text evidence="4 7 8 10">Interacts with TRAF1 (PubMed:11313261). Interacts with RELL1, RELL2 and OXSR1 (PubMed:16389068). Interacts with PLSCR1 (PubMed:22052202). Interacts with STK39 (PubMed:16530727).</text>
</comment>
<comment type="subcellular location">
    <subcellularLocation>
        <location evidence="7">Cell membrane</location>
        <topology evidence="7">Single-pass type I membrane protein</topology>
    </subcellularLocation>
    <subcellularLocation>
        <location evidence="7">Cytoplasm</location>
    </subcellularLocation>
    <subcellularLocation>
        <location evidence="10">Cytoplasm</location>
        <location evidence="10">Perinuclear region</location>
    </subcellularLocation>
</comment>
<comment type="tissue specificity">
    <text evidence="7 11">Spleen, lymph node, brain, breast and peripheral blood leukocytes (at protein level) (PubMed:28688764). Expressed highly in bone marrow and fetal liver. Very low levels in skeletal muscle, testis and colon. Not detected in kidney and pancreas.</text>
</comment>
<comment type="PTM">
    <text evidence="7 8">Phosphorylated in vitro by OXSR1 (PubMed:16389068). Phosphorylated by STK39 (PubMed:16530727).</text>
</comment>
<comment type="disease" evidence="12">
    <disease id="DI-05533">
        <name>Amelogenesis imperfecta 3C</name>
        <acronym>AI3C</acronym>
        <description>An autosomal recessive form of amelogenesis imperfecta, a defect of enamel formation. AI3C is characterized by generalized enamel hypocalcification affecting primary and secondary dentition. The surface of the enamel is rough and often stained. After eruption, the occlusal enamel on the molars disappears due to attrition, leaving a ring of intact enamel remaining on the sides.</description>
        <dbReference type="MIM" id="618386"/>
    </disease>
    <text>The disease is caused by variants affecting the gene represented in this entry.</text>
</comment>
<comment type="similarity">
    <text evidence="13">Belongs to the RELT family.</text>
</comment>
<comment type="sequence caution" evidence="13">
    <conflict type="frameshift">
        <sequence resource="EMBL-CDS" id="BAB84954"/>
    </conflict>
</comment>
<evidence type="ECO:0000250" key="1"/>
<evidence type="ECO:0000255" key="2"/>
<evidence type="ECO:0000256" key="3">
    <source>
        <dbReference type="SAM" id="MobiDB-lite"/>
    </source>
</evidence>
<evidence type="ECO:0000269" key="4">
    <source>
    </source>
</evidence>
<evidence type="ECO:0000269" key="5">
    <source>
    </source>
</evidence>
<evidence type="ECO:0000269" key="6">
    <source>
    </source>
</evidence>
<evidence type="ECO:0000269" key="7">
    <source>
    </source>
</evidence>
<evidence type="ECO:0000269" key="8">
    <source>
    </source>
</evidence>
<evidence type="ECO:0000269" key="9">
    <source>
    </source>
</evidence>
<evidence type="ECO:0000269" key="10">
    <source>
    </source>
</evidence>
<evidence type="ECO:0000269" key="11">
    <source>
    </source>
</evidence>
<evidence type="ECO:0000269" key="12">
    <source>
    </source>
</evidence>
<evidence type="ECO:0000305" key="13"/>
<evidence type="ECO:0007744" key="14">
    <source>
    </source>
</evidence>
<feature type="signal peptide" evidence="4 5">
    <location>
        <begin position="1"/>
        <end position="25"/>
    </location>
</feature>
<feature type="chain" id="PRO_0000034599" description="Tumor necrosis factor receptor superfamily member 19L">
    <location>
        <begin position="26"/>
        <end position="430"/>
    </location>
</feature>
<feature type="topological domain" description="Extracellular" evidence="2">
    <location>
        <begin position="26"/>
        <end position="162"/>
    </location>
</feature>
<feature type="transmembrane region" description="Helical" evidence="2">
    <location>
        <begin position="163"/>
        <end position="183"/>
    </location>
</feature>
<feature type="topological domain" description="Cytoplasmic" evidence="2">
    <location>
        <begin position="184"/>
        <end position="430"/>
    </location>
</feature>
<feature type="repeat" description="TNFR-Cys">
    <location>
        <begin position="50"/>
        <end position="90"/>
    </location>
</feature>
<feature type="region of interest" description="Disordered" evidence="3">
    <location>
        <begin position="134"/>
        <end position="156"/>
    </location>
</feature>
<feature type="region of interest" description="Disordered" evidence="3">
    <location>
        <begin position="373"/>
        <end position="410"/>
    </location>
</feature>
<feature type="short sequence motif" description="RFRV motif; mediates interaction with STK39" evidence="8">
    <location>
        <begin position="349"/>
        <end position="352"/>
    </location>
</feature>
<feature type="compositionally biased region" description="Low complexity" evidence="3">
    <location>
        <begin position="134"/>
        <end position="143"/>
    </location>
</feature>
<feature type="modified residue" description="Phosphothreonine" evidence="14">
    <location>
        <position position="223"/>
    </location>
</feature>
<feature type="glycosylation site" description="N-linked (GlcNAc...) asparagine" evidence="2">
    <location>
        <position position="149"/>
    </location>
</feature>
<feature type="disulfide bond" evidence="1">
    <location>
        <begin position="51"/>
        <end position="65"/>
    </location>
</feature>
<feature type="disulfide bond" evidence="1">
    <location>
        <begin position="71"/>
        <end position="90"/>
    </location>
</feature>
<feature type="sequence variant" id="VAR_022614" description="In dbSNP:rs12362779." evidence="6">
    <original>A</original>
    <variation>V</variation>
    <location>
        <position position="332"/>
    </location>
</feature>
<feature type="sequence variant" id="VAR_082198" description="In AI3C; uncertain significance; dbSNP:rs762816338." evidence="12">
    <original>R</original>
    <variation>P</variation>
    <location>
        <position position="422"/>
    </location>
</feature>
<feature type="mutagenesis site" description="Loss of interaction with STK39." evidence="8">
    <original>F</original>
    <variation>A</variation>
    <location>
        <position position="350"/>
    </location>
</feature>
<feature type="sequence conflict" description="In Ref. 4; BAB84954." evidence="13" ref="4">
    <original>D</original>
    <variation>S</variation>
    <location>
        <position position="122"/>
    </location>
</feature>
<feature type="sequence conflict" description="In Ref. 2; BAB55441." evidence="13" ref="2">
    <original>K</original>
    <variation>E</variation>
    <location>
        <position position="187"/>
    </location>
</feature>
<feature type="sequence conflict" description="In Ref. 2; BAB55441." evidence="13" ref="2">
    <original>H</original>
    <variation>R</variation>
    <location>
        <position position="273"/>
    </location>
</feature>
<keyword id="KW-0986">Amelogenesis imperfecta</keyword>
<keyword id="KW-0053">Apoptosis</keyword>
<keyword id="KW-1003">Cell membrane</keyword>
<keyword id="KW-0963">Cytoplasm</keyword>
<keyword id="KW-0903">Direct protein sequencing</keyword>
<keyword id="KW-0225">Disease variant</keyword>
<keyword id="KW-1015">Disulfide bond</keyword>
<keyword id="KW-0325">Glycoprotein</keyword>
<keyword id="KW-0472">Membrane</keyword>
<keyword id="KW-0597">Phosphoprotein</keyword>
<keyword id="KW-1267">Proteomics identification</keyword>
<keyword id="KW-0675">Receptor</keyword>
<keyword id="KW-1185">Reference proteome</keyword>
<keyword id="KW-0732">Signal</keyword>
<keyword id="KW-0812">Transmembrane</keyword>
<keyword id="KW-1133">Transmembrane helix</keyword>
<sequence length="430" mass="46092">MKPSLLCRPLSCFLMLLPWPLATLTSTTLWQCPPGEEPDLDPGQGTLCRPCPPGTFSAAWGSSPCQPHARCSLWRRLEAQVGMATRDTLCGDCWPGWFGPWGVPRVPCQPCSWAPLGTHGCDEWGRRARRGVEVAAGASSGGETRQPGNGTRAGGPEETAAQYAVIAIVPVFCLMGLLGILVCNLLKRKGYHCTAHKEVGPGPGGGGSGINPAYRTEDANEDTIGVLVRLITEKKENAAALEELLKEYHSKQLVQTSHRPVSKLPPAPPNVPHICPHRHHLHTVQGLASLSGPCCSRCSQKKWPEVLLSPEAVAATTPVPSLLPNPTRVPKAGAKAGRQGEITILSVGRFRVARIPEQRTSSMVSEVKTITEAGPSWGDLPDSPQPGLPPEQQALLGSGGSRTKWLKPPAENKAEENRYVVRLSESNLVI</sequence>
<dbReference type="EMBL" id="AF319553">
    <property type="protein sequence ID" value="AAK77356.1"/>
    <property type="molecule type" value="mRNA"/>
</dbReference>
<dbReference type="EMBL" id="AK027899">
    <property type="protein sequence ID" value="BAB55441.1"/>
    <property type="molecule type" value="mRNA"/>
</dbReference>
<dbReference type="EMBL" id="BC001812">
    <property type="status" value="NOT_ANNOTATED_CDS"/>
    <property type="molecule type" value="mRNA"/>
</dbReference>
<dbReference type="EMBL" id="BC017279">
    <property type="protein sequence ID" value="AAH17279.1"/>
    <property type="molecule type" value="mRNA"/>
</dbReference>
<dbReference type="EMBL" id="BC051810">
    <property type="protein sequence ID" value="AAH51810.2"/>
    <property type="molecule type" value="mRNA"/>
</dbReference>
<dbReference type="EMBL" id="AK074128">
    <property type="protein sequence ID" value="BAB84954.1"/>
    <property type="status" value="ALT_FRAME"/>
    <property type="molecule type" value="mRNA"/>
</dbReference>
<dbReference type="CCDS" id="CCDS8222.1"/>
<dbReference type="RefSeq" id="NP_116260.2">
    <property type="nucleotide sequence ID" value="NM_032871.3"/>
</dbReference>
<dbReference type="RefSeq" id="NP_689408.1">
    <property type="nucleotide sequence ID" value="NM_152222.2"/>
</dbReference>
<dbReference type="BioGRID" id="124388">
    <property type="interactions" value="75"/>
</dbReference>
<dbReference type="FunCoup" id="Q969Z4">
    <property type="interactions" value="1060"/>
</dbReference>
<dbReference type="IntAct" id="Q969Z4">
    <property type="interactions" value="52"/>
</dbReference>
<dbReference type="STRING" id="9606.ENSP00000064780"/>
<dbReference type="GlyCosmos" id="Q969Z4">
    <property type="glycosylation" value="1 site, No reported glycans"/>
</dbReference>
<dbReference type="GlyGen" id="Q969Z4">
    <property type="glycosylation" value="1 site"/>
</dbReference>
<dbReference type="iPTMnet" id="Q969Z4"/>
<dbReference type="PhosphoSitePlus" id="Q969Z4"/>
<dbReference type="BioMuta" id="RELT"/>
<dbReference type="DMDM" id="21264092"/>
<dbReference type="jPOST" id="Q969Z4"/>
<dbReference type="MassIVE" id="Q969Z4"/>
<dbReference type="PaxDb" id="9606-ENSP00000064780"/>
<dbReference type="PeptideAtlas" id="Q969Z4"/>
<dbReference type="ProteomicsDB" id="75884"/>
<dbReference type="Antibodypedia" id="30960">
    <property type="antibodies" value="364 antibodies from 32 providers"/>
</dbReference>
<dbReference type="DNASU" id="84957"/>
<dbReference type="Ensembl" id="ENST00000064780.7">
    <property type="protein sequence ID" value="ENSP00000064780.2"/>
    <property type="gene ID" value="ENSG00000054967.13"/>
</dbReference>
<dbReference type="Ensembl" id="ENST00000393580.2">
    <property type="protein sequence ID" value="ENSP00000377207.2"/>
    <property type="gene ID" value="ENSG00000054967.13"/>
</dbReference>
<dbReference type="GeneID" id="84957"/>
<dbReference type="KEGG" id="hsa:84957"/>
<dbReference type="MANE-Select" id="ENST00000064780.7">
    <property type="protein sequence ID" value="ENSP00000064780.2"/>
    <property type="RefSeq nucleotide sequence ID" value="NM_152222.2"/>
    <property type="RefSeq protein sequence ID" value="NP_689408.1"/>
</dbReference>
<dbReference type="UCSC" id="uc001otv.4">
    <property type="organism name" value="human"/>
</dbReference>
<dbReference type="AGR" id="HGNC:13764"/>
<dbReference type="CTD" id="84957"/>
<dbReference type="DisGeNET" id="84957"/>
<dbReference type="GeneCards" id="RELT"/>
<dbReference type="HGNC" id="HGNC:13764">
    <property type="gene designation" value="RELT"/>
</dbReference>
<dbReference type="HPA" id="ENSG00000054967">
    <property type="expression patterns" value="Tissue enriched (bone)"/>
</dbReference>
<dbReference type="MalaCards" id="RELT"/>
<dbReference type="MIM" id="611211">
    <property type="type" value="gene"/>
</dbReference>
<dbReference type="MIM" id="618386">
    <property type="type" value="phenotype"/>
</dbReference>
<dbReference type="neXtProt" id="NX_Q969Z4"/>
<dbReference type="OpenTargets" id="ENSG00000054967"/>
<dbReference type="Orphanet" id="100031">
    <property type="disease" value="Hypoplastic amelogenesis imperfecta"/>
</dbReference>
<dbReference type="PharmGKB" id="PA162401092"/>
<dbReference type="VEuPathDB" id="HostDB:ENSG00000054967"/>
<dbReference type="eggNOG" id="ENOG502QVCC">
    <property type="taxonomic scope" value="Eukaryota"/>
</dbReference>
<dbReference type="GeneTree" id="ENSGT00940000160350"/>
<dbReference type="HOGENOM" id="CLU_058936_0_0_1"/>
<dbReference type="InParanoid" id="Q969Z4"/>
<dbReference type="OMA" id="SRCSQKW"/>
<dbReference type="OrthoDB" id="9864383at2759"/>
<dbReference type="PAN-GO" id="Q969Z4">
    <property type="GO annotations" value="2 GO annotations based on evolutionary models"/>
</dbReference>
<dbReference type="PhylomeDB" id="Q969Z4"/>
<dbReference type="TreeFam" id="TF332339"/>
<dbReference type="PathwayCommons" id="Q969Z4"/>
<dbReference type="SignaLink" id="Q969Z4"/>
<dbReference type="BioGRID-ORCS" id="84957">
    <property type="hits" value="21 hits in 1161 CRISPR screens"/>
</dbReference>
<dbReference type="ChiTaRS" id="RELT">
    <property type="organism name" value="human"/>
</dbReference>
<dbReference type="GeneWiki" id="RELT"/>
<dbReference type="GenomeRNAi" id="84957"/>
<dbReference type="Pharos" id="Q969Z4">
    <property type="development level" value="Tbio"/>
</dbReference>
<dbReference type="PRO" id="PR:Q969Z4"/>
<dbReference type="Proteomes" id="UP000005640">
    <property type="component" value="Chromosome 11"/>
</dbReference>
<dbReference type="RNAct" id="Q969Z4">
    <property type="molecule type" value="protein"/>
</dbReference>
<dbReference type="Bgee" id="ENSG00000054967">
    <property type="expression patterns" value="Expressed in monocyte and 136 other cell types or tissues"/>
</dbReference>
<dbReference type="ExpressionAtlas" id="Q969Z4">
    <property type="expression patterns" value="baseline and differential"/>
</dbReference>
<dbReference type="GO" id="GO:0005829">
    <property type="term" value="C:cytosol"/>
    <property type="evidence" value="ECO:0000314"/>
    <property type="project" value="HPA"/>
</dbReference>
<dbReference type="GO" id="GO:0005730">
    <property type="term" value="C:nucleolus"/>
    <property type="evidence" value="ECO:0000314"/>
    <property type="project" value="HPA"/>
</dbReference>
<dbReference type="GO" id="GO:0005654">
    <property type="term" value="C:nucleoplasm"/>
    <property type="evidence" value="ECO:0000314"/>
    <property type="project" value="HPA"/>
</dbReference>
<dbReference type="GO" id="GO:0048471">
    <property type="term" value="C:perinuclear region of cytoplasm"/>
    <property type="evidence" value="ECO:0007669"/>
    <property type="project" value="UniProtKB-SubCell"/>
</dbReference>
<dbReference type="GO" id="GO:0005886">
    <property type="term" value="C:plasma membrane"/>
    <property type="evidence" value="ECO:0007669"/>
    <property type="project" value="UniProtKB-SubCell"/>
</dbReference>
<dbReference type="GO" id="GO:0097186">
    <property type="term" value="P:amelogenesis"/>
    <property type="evidence" value="ECO:0000315"/>
    <property type="project" value="UniProtKB"/>
</dbReference>
<dbReference type="GO" id="GO:0006915">
    <property type="term" value="P:apoptotic process"/>
    <property type="evidence" value="ECO:0000315"/>
    <property type="project" value="UniProtKB"/>
</dbReference>
<dbReference type="CDD" id="cd13419">
    <property type="entry name" value="TNFRSF19L"/>
    <property type="match status" value="1"/>
</dbReference>
<dbReference type="FunFam" id="2.10.50.10:FF:000039">
    <property type="entry name" value="Tumor necrosis factor receptor superfamily member 19L"/>
    <property type="match status" value="1"/>
</dbReference>
<dbReference type="Gene3D" id="2.10.50.10">
    <property type="entry name" value="Tumor Necrosis Factor Receptor, subunit A, domain 2"/>
    <property type="match status" value="1"/>
</dbReference>
<dbReference type="InterPro" id="IPR022248">
    <property type="entry name" value="TNF_rcpt_RELT"/>
</dbReference>
<dbReference type="InterPro" id="IPR022333">
    <property type="entry name" value="TNFR_19-like"/>
</dbReference>
<dbReference type="InterPro" id="IPR034048">
    <property type="entry name" value="TNFRSF19L_N"/>
</dbReference>
<dbReference type="PANTHER" id="PTHR47397">
    <property type="entry name" value="TUMOR NECROSIS FACTOR RECEPTOR SUPERFAMILY MEMBER 19L"/>
    <property type="match status" value="1"/>
</dbReference>
<dbReference type="PANTHER" id="PTHR47397:SF1">
    <property type="entry name" value="TUMOR NECROSIS FACTOR RECEPTOR SUPERFAMILY MEMBER 19L"/>
    <property type="match status" value="1"/>
</dbReference>
<dbReference type="Pfam" id="PF12606">
    <property type="entry name" value="RELT"/>
    <property type="match status" value="1"/>
</dbReference>
<dbReference type="PRINTS" id="PR01970">
    <property type="entry name" value="TNFACTORR19L"/>
</dbReference>
<dbReference type="SUPFAM" id="SSF57586">
    <property type="entry name" value="TNF receptor-like"/>
    <property type="match status" value="1"/>
</dbReference>
<gene>
    <name type="primary">RELT</name>
    <name type="synonym">TNFRSF19L</name>
</gene>
<proteinExistence type="evidence at protein level"/>
<protein>
    <recommendedName>
        <fullName>Tumor necrosis factor receptor superfamily member 19L</fullName>
    </recommendedName>
    <alternativeName>
        <fullName>Receptor expressed in lymphoid tissues</fullName>
    </alternativeName>
</protein>